<evidence type="ECO:0000250" key="1">
    <source>
        <dbReference type="UniProtKB" id="Q9JI93"/>
    </source>
</evidence>
<evidence type="ECO:0000255" key="2"/>
<evidence type="ECO:0000256" key="3">
    <source>
        <dbReference type="SAM" id="MobiDB-lite"/>
    </source>
</evidence>
<evidence type="ECO:0000269" key="4">
    <source>
    </source>
</evidence>
<evidence type="ECO:0000269" key="5">
    <source>
    </source>
</evidence>
<evidence type="ECO:0000269" key="6">
    <source>
    </source>
</evidence>
<evidence type="ECO:0000303" key="7">
    <source>
    </source>
</evidence>
<evidence type="ECO:0000305" key="8"/>
<evidence type="ECO:0000305" key="9">
    <source>
    </source>
</evidence>
<dbReference type="EC" id="2.4.2.-" evidence="8"/>
<dbReference type="EMBL" id="AC007138">
    <property type="protein sequence ID" value="AAD22639.1"/>
    <property type="molecule type" value="Genomic_DNA"/>
</dbReference>
<dbReference type="EMBL" id="AF104919">
    <property type="protein sequence ID" value="AAC72867.1"/>
    <property type="molecule type" value="Genomic_DNA"/>
</dbReference>
<dbReference type="EMBL" id="AL161492">
    <property type="protein sequence ID" value="CAB77747.1"/>
    <property type="molecule type" value="Genomic_DNA"/>
</dbReference>
<dbReference type="EMBL" id="CP002687">
    <property type="protein sequence ID" value="AEE82075.1"/>
    <property type="molecule type" value="Genomic_DNA"/>
</dbReference>
<dbReference type="EMBL" id="AY924810">
    <property type="protein sequence ID" value="AAX23885.1"/>
    <property type="molecule type" value="mRNA"/>
</dbReference>
<dbReference type="EMBL" id="AY630791">
    <property type="protein sequence ID" value="AAT67590.1"/>
    <property type="molecule type" value="mRNA"/>
</dbReference>
<dbReference type="EMBL" id="BK005829">
    <property type="protein sequence ID" value="DAA05811.1"/>
    <property type="molecule type" value="mRNA"/>
</dbReference>
<dbReference type="PIR" id="T01998">
    <property type="entry name" value="T01998"/>
</dbReference>
<dbReference type="RefSeq" id="NP_192086.1">
    <property type="nucleotide sequence ID" value="NM_116407.4"/>
</dbReference>
<dbReference type="STRING" id="3702.Q9ZSJ2"/>
<dbReference type="CAZy" id="GT77">
    <property type="family name" value="Glycosyltransferase Family 77"/>
</dbReference>
<dbReference type="GlyCosmos" id="Q9ZSJ2">
    <property type="glycosylation" value="4 sites, No reported glycans"/>
</dbReference>
<dbReference type="GlyGen" id="Q9ZSJ2">
    <property type="glycosylation" value="4 sites"/>
</dbReference>
<dbReference type="PaxDb" id="3702-AT4G01770.1"/>
<dbReference type="ProteomicsDB" id="236930"/>
<dbReference type="EnsemblPlants" id="AT4G01770.1">
    <property type="protein sequence ID" value="AT4G01770.1"/>
    <property type="gene ID" value="AT4G01770"/>
</dbReference>
<dbReference type="GeneID" id="828129"/>
<dbReference type="Gramene" id="AT4G01770.1">
    <property type="protein sequence ID" value="AT4G01770.1"/>
    <property type="gene ID" value="AT4G01770"/>
</dbReference>
<dbReference type="KEGG" id="ath:AT4G01770"/>
<dbReference type="Araport" id="AT4G01770"/>
<dbReference type="TAIR" id="AT4G01770">
    <property type="gene designation" value="RGXT1"/>
</dbReference>
<dbReference type="eggNOG" id="ENOG502QT5X">
    <property type="taxonomic scope" value="Eukaryota"/>
</dbReference>
<dbReference type="HOGENOM" id="CLU_051257_0_0_1"/>
<dbReference type="InParanoid" id="Q9ZSJ2"/>
<dbReference type="OMA" id="PSKWDDY"/>
<dbReference type="PhylomeDB" id="Q9ZSJ2"/>
<dbReference type="PRO" id="PR:Q9ZSJ2"/>
<dbReference type="Proteomes" id="UP000006548">
    <property type="component" value="Chromosome 4"/>
</dbReference>
<dbReference type="ExpressionAtlas" id="Q9ZSJ2">
    <property type="expression patterns" value="baseline and differential"/>
</dbReference>
<dbReference type="GO" id="GO:0005794">
    <property type="term" value="C:Golgi apparatus"/>
    <property type="evidence" value="ECO:0000314"/>
    <property type="project" value="TAIR"/>
</dbReference>
<dbReference type="GO" id="GO:0000139">
    <property type="term" value="C:Golgi membrane"/>
    <property type="evidence" value="ECO:0007669"/>
    <property type="project" value="UniProtKB-SubCell"/>
</dbReference>
<dbReference type="GO" id="GO:0035252">
    <property type="term" value="F:UDP-xylosyltransferase activity"/>
    <property type="evidence" value="ECO:0000314"/>
    <property type="project" value="TAIR"/>
</dbReference>
<dbReference type="GO" id="GO:0010306">
    <property type="term" value="P:rhamnogalacturonan II biosynthetic process"/>
    <property type="evidence" value="ECO:0000315"/>
    <property type="project" value="TAIR"/>
</dbReference>
<dbReference type="InterPro" id="IPR005069">
    <property type="entry name" value="Nucl-diP-sugar_transferase"/>
</dbReference>
<dbReference type="InterPro" id="IPR029044">
    <property type="entry name" value="Nucleotide-diphossugar_trans"/>
</dbReference>
<dbReference type="InterPro" id="IPR052636">
    <property type="entry name" value="UDP-D-xylose:L-fucose_XylT"/>
</dbReference>
<dbReference type="PANTHER" id="PTHR47032">
    <property type="entry name" value="UDP-D-XYLOSE:L-FUCOSE ALPHA-1,3-D-XYLOSYLTRANSFERASE-RELATED"/>
    <property type="match status" value="1"/>
</dbReference>
<dbReference type="PANTHER" id="PTHR47032:SF1">
    <property type="entry name" value="UDP-D-XYLOSE:L-FUCOSE ALPHA-1,3-D-XYLOSYLTRANSFERASE-RELATED"/>
    <property type="match status" value="1"/>
</dbReference>
<dbReference type="Pfam" id="PF03407">
    <property type="entry name" value="Nucleotid_trans"/>
    <property type="match status" value="1"/>
</dbReference>
<dbReference type="SUPFAM" id="SSF53448">
    <property type="entry name" value="Nucleotide-diphospho-sugar transferases"/>
    <property type="match status" value="1"/>
</dbReference>
<accession>Q9ZSJ2</accession>
<accession>Q6DYB4</accession>
<reference key="1">
    <citation type="journal article" date="1999" name="Nature">
        <title>Sequence and analysis of chromosome 4 of the plant Arabidopsis thaliana.</title>
        <authorList>
            <person name="Mayer K.F.X."/>
            <person name="Schueller C."/>
            <person name="Wambutt R."/>
            <person name="Murphy G."/>
            <person name="Volckaert G."/>
            <person name="Pohl T."/>
            <person name="Duesterhoeft A."/>
            <person name="Stiekema W."/>
            <person name="Entian K.-D."/>
            <person name="Terryn N."/>
            <person name="Harris B."/>
            <person name="Ansorge W."/>
            <person name="Brandt P."/>
            <person name="Grivell L.A."/>
            <person name="Rieger M."/>
            <person name="Weichselgartner M."/>
            <person name="de Simone V."/>
            <person name="Obermaier B."/>
            <person name="Mache R."/>
            <person name="Mueller M."/>
            <person name="Kreis M."/>
            <person name="Delseny M."/>
            <person name="Puigdomenech P."/>
            <person name="Watson M."/>
            <person name="Schmidtheini T."/>
            <person name="Reichert B."/>
            <person name="Portetelle D."/>
            <person name="Perez-Alonso M."/>
            <person name="Boutry M."/>
            <person name="Bancroft I."/>
            <person name="Vos P."/>
            <person name="Hoheisel J."/>
            <person name="Zimmermann W."/>
            <person name="Wedler H."/>
            <person name="Ridley P."/>
            <person name="Langham S.-A."/>
            <person name="McCullagh B."/>
            <person name="Bilham L."/>
            <person name="Robben J."/>
            <person name="van der Schueren J."/>
            <person name="Grymonprez B."/>
            <person name="Chuang Y.-J."/>
            <person name="Vandenbussche F."/>
            <person name="Braeken M."/>
            <person name="Weltjens I."/>
            <person name="Voet M."/>
            <person name="Bastiaens I."/>
            <person name="Aert R."/>
            <person name="Defoor E."/>
            <person name="Weitzenegger T."/>
            <person name="Bothe G."/>
            <person name="Ramsperger U."/>
            <person name="Hilbert H."/>
            <person name="Braun M."/>
            <person name="Holzer E."/>
            <person name="Brandt A."/>
            <person name="Peters S."/>
            <person name="van Staveren M."/>
            <person name="Dirkse W."/>
            <person name="Mooijman P."/>
            <person name="Klein Lankhorst R."/>
            <person name="Rose M."/>
            <person name="Hauf J."/>
            <person name="Koetter P."/>
            <person name="Berneiser S."/>
            <person name="Hempel S."/>
            <person name="Feldpausch M."/>
            <person name="Lamberth S."/>
            <person name="Van den Daele H."/>
            <person name="De Keyser A."/>
            <person name="Buysshaert C."/>
            <person name="Gielen J."/>
            <person name="Villarroel R."/>
            <person name="De Clercq R."/>
            <person name="van Montagu M."/>
            <person name="Rogers J."/>
            <person name="Cronin A."/>
            <person name="Quail M.A."/>
            <person name="Bray-Allen S."/>
            <person name="Clark L."/>
            <person name="Doggett J."/>
            <person name="Hall S."/>
            <person name="Kay M."/>
            <person name="Lennard N."/>
            <person name="McLay K."/>
            <person name="Mayes R."/>
            <person name="Pettett A."/>
            <person name="Rajandream M.A."/>
            <person name="Lyne M."/>
            <person name="Benes V."/>
            <person name="Rechmann S."/>
            <person name="Borkova D."/>
            <person name="Bloecker H."/>
            <person name="Scharfe M."/>
            <person name="Grimm M."/>
            <person name="Loehnert T.-H."/>
            <person name="Dose S."/>
            <person name="de Haan M."/>
            <person name="Maarse A.C."/>
            <person name="Schaefer M."/>
            <person name="Mueller-Auer S."/>
            <person name="Gabel C."/>
            <person name="Fuchs M."/>
            <person name="Fartmann B."/>
            <person name="Granderath K."/>
            <person name="Dauner D."/>
            <person name="Herzl A."/>
            <person name="Neumann S."/>
            <person name="Argiriou A."/>
            <person name="Vitale D."/>
            <person name="Liguori R."/>
            <person name="Piravandi E."/>
            <person name="Massenet O."/>
            <person name="Quigley F."/>
            <person name="Clabauld G."/>
            <person name="Muendlein A."/>
            <person name="Felber R."/>
            <person name="Schnabl S."/>
            <person name="Hiller R."/>
            <person name="Schmidt W."/>
            <person name="Lecharny A."/>
            <person name="Aubourg S."/>
            <person name="Chefdor F."/>
            <person name="Cooke R."/>
            <person name="Berger C."/>
            <person name="Monfort A."/>
            <person name="Casacuberta E."/>
            <person name="Gibbons T."/>
            <person name="Weber N."/>
            <person name="Vandenbol M."/>
            <person name="Bargues M."/>
            <person name="Terol J."/>
            <person name="Torres A."/>
            <person name="Perez-Perez A."/>
            <person name="Purnelle B."/>
            <person name="Bent E."/>
            <person name="Johnson S."/>
            <person name="Tacon D."/>
            <person name="Jesse T."/>
            <person name="Heijnen L."/>
            <person name="Schwarz S."/>
            <person name="Scholler P."/>
            <person name="Heber S."/>
            <person name="Francs P."/>
            <person name="Bielke C."/>
            <person name="Frishman D."/>
            <person name="Haase D."/>
            <person name="Lemcke K."/>
            <person name="Mewes H.-W."/>
            <person name="Stocker S."/>
            <person name="Zaccaria P."/>
            <person name="Bevan M."/>
            <person name="Wilson R.K."/>
            <person name="de la Bastide M."/>
            <person name="Habermann K."/>
            <person name="Parnell L."/>
            <person name="Dedhia N."/>
            <person name="Gnoj L."/>
            <person name="Schutz K."/>
            <person name="Huang E."/>
            <person name="Spiegel L."/>
            <person name="Sekhon M."/>
            <person name="Murray J."/>
            <person name="Sheet P."/>
            <person name="Cordes M."/>
            <person name="Abu-Threideh J."/>
            <person name="Stoneking T."/>
            <person name="Kalicki J."/>
            <person name="Graves T."/>
            <person name="Harmon G."/>
            <person name="Edwards J."/>
            <person name="Latreille P."/>
            <person name="Courtney L."/>
            <person name="Cloud J."/>
            <person name="Abbott A."/>
            <person name="Scott K."/>
            <person name="Johnson D."/>
            <person name="Minx P."/>
            <person name="Bentley D."/>
            <person name="Fulton B."/>
            <person name="Miller N."/>
            <person name="Greco T."/>
            <person name="Kemp K."/>
            <person name="Kramer J."/>
            <person name="Fulton L."/>
            <person name="Mardis E."/>
            <person name="Dante M."/>
            <person name="Pepin K."/>
            <person name="Hillier L.W."/>
            <person name="Nelson J."/>
            <person name="Spieth J."/>
            <person name="Ryan E."/>
            <person name="Andrews S."/>
            <person name="Geisel C."/>
            <person name="Layman D."/>
            <person name="Du H."/>
            <person name="Ali J."/>
            <person name="Berghoff A."/>
            <person name="Jones K."/>
            <person name="Drone K."/>
            <person name="Cotton M."/>
            <person name="Joshu C."/>
            <person name="Antonoiu B."/>
            <person name="Zidanic M."/>
            <person name="Strong C."/>
            <person name="Sun H."/>
            <person name="Lamar B."/>
            <person name="Yordan C."/>
            <person name="Ma P."/>
            <person name="Zhong J."/>
            <person name="Preston R."/>
            <person name="Vil D."/>
            <person name="Shekher M."/>
            <person name="Matero A."/>
            <person name="Shah R."/>
            <person name="Swaby I.K."/>
            <person name="O'Shaughnessy A."/>
            <person name="Rodriguez M."/>
            <person name="Hoffman J."/>
            <person name="Till S."/>
            <person name="Granat S."/>
            <person name="Shohdy N."/>
            <person name="Hasegawa A."/>
            <person name="Hameed A."/>
            <person name="Lodhi M."/>
            <person name="Johnson A."/>
            <person name="Chen E."/>
            <person name="Marra M.A."/>
            <person name="Martienssen R."/>
            <person name="McCombie W.R."/>
        </authorList>
    </citation>
    <scope>NUCLEOTIDE SEQUENCE [LARGE SCALE GENOMIC DNA]</scope>
    <source>
        <strain>cv. Columbia</strain>
    </source>
</reference>
<reference key="2">
    <citation type="journal article" date="2017" name="Plant J.">
        <title>Araport11: a complete reannotation of the Arabidopsis thaliana reference genome.</title>
        <authorList>
            <person name="Cheng C.Y."/>
            <person name="Krishnakumar V."/>
            <person name="Chan A.P."/>
            <person name="Thibaud-Nissen F."/>
            <person name="Schobel S."/>
            <person name="Town C.D."/>
        </authorList>
    </citation>
    <scope>GENOME REANNOTATION</scope>
    <source>
        <strain>cv. Columbia</strain>
    </source>
</reference>
<reference key="3">
    <citation type="submission" date="2005-03" db="EMBL/GenBank/DDBJ databases">
        <authorList>
            <person name="Underwood B.A."/>
            <person name="Xiao Y.-L."/>
            <person name="Moskal W.A. Jr."/>
            <person name="Monaghan E.L."/>
            <person name="Wang W."/>
            <person name="Redman J.C."/>
            <person name="Wu H.C."/>
            <person name="Utterback T."/>
            <person name="Town C.D."/>
        </authorList>
    </citation>
    <scope>NUCLEOTIDE SEQUENCE [LARGE SCALE MRNA]</scope>
    <source>
        <strain>cv. Columbia</strain>
    </source>
</reference>
<reference key="4">
    <citation type="submission" date="2004-08" db="EMBL/GenBank/DDBJ databases">
        <title>Reconstruction of cDNA sequences for hypothetical genes in Arabidopsis thaliana from 5' and 3' RACE products.</title>
        <authorList>
            <person name="Xiao Y.-L."/>
            <person name="Underwood B.A."/>
            <person name="Moskal W.A. Jr."/>
            <person name="Wang W."/>
            <person name="Redman J.C."/>
            <person name="Wu H.C."/>
            <person name="Utterback T."/>
            <person name="Town C.D."/>
        </authorList>
    </citation>
    <scope>NUCLEOTIDE SEQUENCE [LARGE SCALE MRNA]</scope>
    <source>
        <strain>cv. Columbia</strain>
    </source>
</reference>
<reference key="5">
    <citation type="journal article" date="2006" name="Plant Cell">
        <title>Arabidopsis thaliana RGXT1 and RGXT2 encode Golgi-localized (1,3)-alpha-D-xylosyltransferases involved in the synthesis of pectic rhamnogalacturonan-II.</title>
        <authorList>
            <person name="Egelund J."/>
            <person name="Petersen B.L."/>
            <person name="Motawia M.S."/>
            <person name="Damager I."/>
            <person name="Faik A."/>
            <person name="Olsen C.E."/>
            <person name="Ishii T."/>
            <person name="Clausen H."/>
            <person name="Ulvskov P."/>
            <person name="Geshi N."/>
        </authorList>
    </citation>
    <scope>IDENTIFICATION</scope>
    <scope>FUNCTION</scope>
    <scope>COFACTOR</scope>
    <scope>SUBCELLULAR LOCATION</scope>
    <scope>TISSUE SPECIFICITY</scope>
    <scope>GLYCOSYLATION</scope>
    <scope>DISRUPTION PHENOTYPE</scope>
</reference>
<reference key="6">
    <citation type="journal article" date="2008" name="FEBS Lett.">
        <title>Functional characterisation of a putative rhamnogalacturonan II specific xylosyltransferase.</title>
        <authorList>
            <person name="Egelund J."/>
            <person name="Damager I."/>
            <person name="Faber K."/>
            <person name="Olsen C.E."/>
            <person name="Ulvskov P."/>
            <person name="Petersen B.L."/>
        </authorList>
    </citation>
    <scope>BIOPHYSICOCHEMICAL PROPERTIES</scope>
</reference>
<reference key="7">
    <citation type="journal article" date="2009" name="Glycoconj. J.">
        <title>Assay and heterologous expression in Pichia pastoris of plant cell wall type-II membrane anchored glycosyltransferases.</title>
        <authorList>
            <person name="Petersen B.L."/>
            <person name="Egelund J."/>
            <person name="Damager I."/>
            <person name="Faber K."/>
            <person name="Jensen J.K."/>
            <person name="Yang Z."/>
            <person name="Bennett E.P."/>
            <person name="Scheller H.V."/>
            <person name="Ulvskov P."/>
        </authorList>
    </citation>
    <scope>FUNCTION</scope>
    <scope>BIOPHYSICOCHEMICAL PROPERTIES</scope>
</reference>
<feature type="chain" id="PRO_0000423713" description="UDP-D-xylose:L-fucose alpha-1,3-D-xylosyltransferase 1">
    <location>
        <begin position="1"/>
        <end position="361"/>
    </location>
</feature>
<feature type="topological domain" description="Cytoplasmic" evidence="2">
    <location>
        <begin position="1"/>
        <end position="34"/>
    </location>
</feature>
<feature type="transmembrane region" description="Helical; Signal-anchor for type II membrane protein" evidence="2">
    <location>
        <begin position="35"/>
        <end position="55"/>
    </location>
</feature>
<feature type="topological domain" description="Lumenal" evidence="2">
    <location>
        <begin position="56"/>
        <end position="361"/>
    </location>
</feature>
<feature type="region of interest" description="Disordered" evidence="3">
    <location>
        <begin position="1"/>
        <end position="21"/>
    </location>
</feature>
<feature type="short sequence motif" description="DXD motif" evidence="8">
    <location>
        <begin position="190"/>
        <end position="192"/>
    </location>
</feature>
<feature type="compositionally biased region" description="Low complexity" evidence="3">
    <location>
        <begin position="11"/>
        <end position="21"/>
    </location>
</feature>
<feature type="glycosylation site" description="N-linked (GlcNAc...) asparagine" evidence="2">
    <location>
        <position position="92"/>
    </location>
</feature>
<feature type="glycosylation site" description="N-linked (GlcNAc...) asparagine" evidence="2">
    <location>
        <position position="167"/>
    </location>
</feature>
<feature type="glycosylation site" description="N-linked (GlcNAc...) asparagine" evidence="2">
    <location>
        <position position="222"/>
    </location>
</feature>
<feature type="glycosylation site" description="N-linked (GlcNAc...) asparagine" evidence="2">
    <location>
        <position position="286"/>
    </location>
</feature>
<feature type="sequence conflict" description="In Ref. 4; AAT67590." evidence="8" ref="4">
    <original>L</original>
    <variation>P</variation>
    <location>
        <position position="353"/>
    </location>
</feature>
<keyword id="KW-0961">Cell wall biogenesis/degradation</keyword>
<keyword id="KW-0325">Glycoprotein</keyword>
<keyword id="KW-0328">Glycosyltransferase</keyword>
<keyword id="KW-0333">Golgi apparatus</keyword>
<keyword id="KW-0472">Membrane</keyword>
<keyword id="KW-1185">Reference proteome</keyword>
<keyword id="KW-0735">Signal-anchor</keyword>
<keyword id="KW-0808">Transferase</keyword>
<keyword id="KW-0812">Transmembrane</keyword>
<keyword id="KW-1133">Transmembrane helix</keyword>
<sequence>MEQKQHILKQSTFSSSPSSYSSISDRPISLLSRNGLLLLLLALVLLLGVLLPWPGSPLFLFPNRLSSSLSPSPQSKWRDYTLAQAARFVAKNGTVIVCAVSSPFLPFLNNWLISVSRQKHQDKVLVIAEDYITLYKVNEKWPGHAVLIPPALDSKTAFSFGSQGFFNFTARRPQHLLQILELGYNVMYNDVDMVWLQDPFLYLEGSHDAYFTDDMPQIKPLNHSHDLPHPDRNGETYICSCMIYLRPTNGAKLLMKKWSEELQSQAWSESIRFKANDQPAFNLALNKTAHQVDLYLLSQVAFPTGGLYFKNEAWVQETKGKHVIVHNNYIIGYDRKMKRFQDYGLWLVDDHALESPLGKLE</sequence>
<protein>
    <recommendedName>
        <fullName evidence="8">UDP-D-xylose:L-fucose alpha-1,3-D-xylosyltransferase 1</fullName>
        <ecNumber evidence="8">2.4.2.-</ecNumber>
    </recommendedName>
    <alternativeName>
        <fullName evidence="8">Rhamnogalacturonan xylosyltransferase 1</fullName>
    </alternativeName>
</protein>
<gene>
    <name evidence="7" type="primary">RGXT1</name>
    <name type="ordered locus">At4g01770</name>
    <name type="ORF">T15B16.8</name>
    <name type="ORF">T7B11.3</name>
</gene>
<name>RGXT1_ARATH</name>
<organism>
    <name type="scientific">Arabidopsis thaliana</name>
    <name type="common">Mouse-ear cress</name>
    <dbReference type="NCBI Taxonomy" id="3702"/>
    <lineage>
        <taxon>Eukaryota</taxon>
        <taxon>Viridiplantae</taxon>
        <taxon>Streptophyta</taxon>
        <taxon>Embryophyta</taxon>
        <taxon>Tracheophyta</taxon>
        <taxon>Spermatophyta</taxon>
        <taxon>Magnoliopsida</taxon>
        <taxon>eudicotyledons</taxon>
        <taxon>Gunneridae</taxon>
        <taxon>Pentapetalae</taxon>
        <taxon>rosids</taxon>
        <taxon>malvids</taxon>
        <taxon>Brassicales</taxon>
        <taxon>Brassicaceae</taxon>
        <taxon>Camelineae</taxon>
        <taxon>Arabidopsis</taxon>
    </lineage>
</organism>
<comment type="function">
    <text evidence="4 6">Catalyzes the transfer of D-xylose from UDP-alpha-D-xylose onto L-fucose. Probably involved in the biosynthesis of rhamnogalacturonan II (RG-II) through xylosylation of the internal fucose moiety of the A-chain of RG-II, a structurally complex pectic polysaccharide of the primary cell wall. RG-II is essential for the cell wall integrity of rapidly growing tissues such as roots and pollen tube growth and elongation.</text>
</comment>
<comment type="cofactor">
    <cofactor evidence="4">
        <name>Mn(2+)</name>
        <dbReference type="ChEBI" id="CHEBI:29035"/>
    </cofactor>
    <cofactor evidence="4">
        <name>Mg(2+)</name>
        <dbReference type="ChEBI" id="CHEBI:18420"/>
    </cofactor>
</comment>
<comment type="biophysicochemical properties">
    <kinetics>
        <KM evidence="5 6">60 uM for UDP-xylose</KM>
    </kinetics>
    <phDependence>
        <text evidence="5 6">Optimum pH is 7.0.</text>
    </phDependence>
</comment>
<comment type="subcellular location">
    <subcellularLocation>
        <location evidence="9">Golgi apparatus membrane</location>
        <topology evidence="9">Single-pass type II membrane protein</topology>
    </subcellularLocation>
</comment>
<comment type="tissue specificity">
    <text evidence="4">Expressed in roots, rosette leaves, cauline leaves and stems.</text>
</comment>
<comment type="domain">
    <text evidence="1">The conserved DXD motif is involved in enzyme activity.</text>
</comment>
<comment type="PTM">
    <text evidence="4">Glycosylated.</text>
</comment>
<comment type="disruption phenotype">
    <text evidence="4">No visible phenotype under normal growth conditions.</text>
</comment>
<comment type="similarity">
    <text evidence="8">Belongs to the glycosyltransferase 77 family.</text>
</comment>
<proteinExistence type="evidence at protein level"/>